<evidence type="ECO:0000255" key="1"/>
<evidence type="ECO:0000256" key="2">
    <source>
        <dbReference type="SAM" id="MobiDB-lite"/>
    </source>
</evidence>
<evidence type="ECO:0000269" key="3">
    <source>
    </source>
</evidence>
<evidence type="ECO:0000305" key="4"/>
<reference key="1">
    <citation type="journal article" date="2005" name="Nature">
        <title>Genomic sequence of the pathogenic and allergenic filamentous fungus Aspergillus fumigatus.</title>
        <authorList>
            <person name="Nierman W.C."/>
            <person name="Pain A."/>
            <person name="Anderson M.J."/>
            <person name="Wortman J.R."/>
            <person name="Kim H.S."/>
            <person name="Arroyo J."/>
            <person name="Berriman M."/>
            <person name="Abe K."/>
            <person name="Archer D.B."/>
            <person name="Bermejo C."/>
            <person name="Bennett J.W."/>
            <person name="Bowyer P."/>
            <person name="Chen D."/>
            <person name="Collins M."/>
            <person name="Coulsen R."/>
            <person name="Davies R."/>
            <person name="Dyer P.S."/>
            <person name="Farman M.L."/>
            <person name="Fedorova N."/>
            <person name="Fedorova N.D."/>
            <person name="Feldblyum T.V."/>
            <person name="Fischer R."/>
            <person name="Fosker N."/>
            <person name="Fraser A."/>
            <person name="Garcia J.L."/>
            <person name="Garcia M.J."/>
            <person name="Goble A."/>
            <person name="Goldman G.H."/>
            <person name="Gomi K."/>
            <person name="Griffith-Jones S."/>
            <person name="Gwilliam R."/>
            <person name="Haas B.J."/>
            <person name="Haas H."/>
            <person name="Harris D.E."/>
            <person name="Horiuchi H."/>
            <person name="Huang J."/>
            <person name="Humphray S."/>
            <person name="Jimenez J."/>
            <person name="Keller N."/>
            <person name="Khouri H."/>
            <person name="Kitamoto K."/>
            <person name="Kobayashi T."/>
            <person name="Konzack S."/>
            <person name="Kulkarni R."/>
            <person name="Kumagai T."/>
            <person name="Lafton A."/>
            <person name="Latge J.-P."/>
            <person name="Li W."/>
            <person name="Lord A."/>
            <person name="Lu C."/>
            <person name="Majoros W.H."/>
            <person name="May G.S."/>
            <person name="Miller B.L."/>
            <person name="Mohamoud Y."/>
            <person name="Molina M."/>
            <person name="Monod M."/>
            <person name="Mouyna I."/>
            <person name="Mulligan S."/>
            <person name="Murphy L.D."/>
            <person name="O'Neil S."/>
            <person name="Paulsen I."/>
            <person name="Penalva M.A."/>
            <person name="Pertea M."/>
            <person name="Price C."/>
            <person name="Pritchard B.L."/>
            <person name="Quail M.A."/>
            <person name="Rabbinowitsch E."/>
            <person name="Rawlins N."/>
            <person name="Rajandream M.A."/>
            <person name="Reichard U."/>
            <person name="Renauld H."/>
            <person name="Robson G.D."/>
            <person name="Rodriguez de Cordoba S."/>
            <person name="Rodriguez-Pena J.M."/>
            <person name="Ronning C.M."/>
            <person name="Rutter S."/>
            <person name="Salzberg S.L."/>
            <person name="Sanchez M."/>
            <person name="Sanchez-Ferrero J.C."/>
            <person name="Saunders D."/>
            <person name="Seeger K."/>
            <person name="Squares R."/>
            <person name="Squares S."/>
            <person name="Takeuchi M."/>
            <person name="Tekaia F."/>
            <person name="Turner G."/>
            <person name="Vazquez de Aldana C.R."/>
            <person name="Weidman J."/>
            <person name="White O."/>
            <person name="Woodward J.R."/>
            <person name="Yu J.-H."/>
            <person name="Fraser C.M."/>
            <person name="Galagan J.E."/>
            <person name="Asai K."/>
            <person name="Machida M."/>
            <person name="Hall N."/>
            <person name="Barrell B.G."/>
            <person name="Denning D.W."/>
        </authorList>
    </citation>
    <scope>NUCLEOTIDE SEQUENCE [LARGE SCALE GENOMIC DNA]</scope>
    <source>
        <strain>ATCC MYA-4609 / CBS 101355 / FGSC A1100 / Af293</strain>
    </source>
</reference>
<reference key="2">
    <citation type="journal article" date="2013" name="J. Biol. Chem.">
        <title>SUN proteins belong to a novel family of beta-(1,3)-glucan-modifying enzymes involved in fungal morphogenesis.</title>
        <authorList>
            <person name="Gastebois A."/>
            <person name="Aimanianda V."/>
            <person name="Bachellier-Bassi S."/>
            <person name="Nesseir A."/>
            <person name="Firon A."/>
            <person name="Beauvais A."/>
            <person name="Schmitt C."/>
            <person name="England P."/>
            <person name="Beau R."/>
            <person name="Prevost M.C."/>
            <person name="d'Enfert C."/>
            <person name="Latge J.P."/>
            <person name="Mouyna I."/>
        </authorList>
    </citation>
    <scope>INDUCTION</scope>
    <scope>DISRUPTION PHENOTYPE</scope>
    <scope>FUNCTION</scope>
    <scope>GLYCOSYLATION</scope>
    <scope>CATALYTIC ACTIVITY</scope>
    <scope>BIOPHYSICOCHEMICAL PROPERTIES</scope>
</reference>
<comment type="function">
    <text evidence="3">Cell surface beta-glucosidase involved in cell wall biosynthesis and septation, and thus required for normal growth and correct hyphal morphogenesis. Has hydrolytic activity on linear (1-&gt;3)-beta-D-glucans such as laminaribiose and other laminarioligosaccharides. Also has a minor transferase activity.</text>
</comment>
<comment type="biophysicochemical properties">
    <phDependence>
        <text evidence="3">Optimum pH is 5.5.</text>
    </phDependence>
    <temperatureDependence>
        <text evidence="3">Optimum temperature is 37 degrees Celsius.</text>
    </temperatureDependence>
</comment>
<comment type="subcellular location">
    <subcellularLocation>
        <location>Secreted</location>
        <location>Cell wall</location>
    </subcellularLocation>
    <subcellularLocation>
        <location>Secreted</location>
    </subcellularLocation>
</comment>
<comment type="induction">
    <text evidence="3">Expression was detected 4h after the initiation of spore germination and during mycelial growth.</text>
</comment>
<comment type="PTM">
    <text evidence="3">Highly glycosylated.</text>
</comment>
<comment type="disruption phenotype">
    <text evidence="3">Leads to smaller colonies and swollen and vacuolated hyphae with double cell wall and leaky tips. Also leads to decreased conidiation.</text>
</comment>
<comment type="similarity">
    <text evidence="4">Belongs to the SUN family.</text>
</comment>
<gene>
    <name type="primary">sun1</name>
    <name type="ORF">AFUA_7G05450</name>
</gene>
<feature type="signal peptide" evidence="1">
    <location>
        <begin position="1"/>
        <end position="19"/>
    </location>
</feature>
<feature type="chain" id="PRO_0000425080" description="Secreted beta-glucosidase sun1">
    <location>
        <begin position="20"/>
        <end position="414"/>
    </location>
</feature>
<feature type="region of interest" description="Disordered" evidence="2">
    <location>
        <begin position="115"/>
        <end position="141"/>
    </location>
</feature>
<feature type="compositionally biased region" description="Low complexity" evidence="2">
    <location>
        <begin position="115"/>
        <end position="140"/>
    </location>
</feature>
<feature type="glycosylation site" description="N-linked (GlcNAc...) asparagine" evidence="1">
    <location>
        <position position="80"/>
    </location>
</feature>
<feature type="glycosylation site" description="N-linked (GlcNAc...) asparagine" evidence="1">
    <location>
        <position position="377"/>
    </location>
</feature>
<keyword id="KW-0119">Carbohydrate metabolism</keyword>
<keyword id="KW-0134">Cell wall</keyword>
<keyword id="KW-0961">Cell wall biogenesis/degradation</keyword>
<keyword id="KW-0325">Glycoprotein</keyword>
<keyword id="KW-0326">Glycosidase</keyword>
<keyword id="KW-0378">Hydrolase</keyword>
<keyword id="KW-0624">Polysaccharide degradation</keyword>
<keyword id="KW-1185">Reference proteome</keyword>
<keyword id="KW-0964">Secreted</keyword>
<keyword id="KW-0732">Signal</keyword>
<sequence length="414" mass="43504">MKFNTVALTLATAGSLVTAQHHHQHRHHQHKREDVVESSATVVQYELDGKPISLKQVCAGLADNTLKFANNDHPTGICDNLSSAAAPASTPEVTSAFAPAQFIELSSVVTSATPTSASSSETVQTPAASSSSASSSSTATGLDADFPDGELDCSTFPSEYGAIPLDYLKLGGWSGIQYVSYAGNFINDIVTAVAGDTCKDGAMCSYACPPGYQKSQWPSTQGATGQSVGGIECRNGKLHLTNPSLSKKLCIPGVGGVHVQNTLGETVAVCRTDYPGTESETIPIGLGGNDLQPLTCPDGETYYKWQGKTTSAQYYVNPKGVTPEKGCQWGDGTQPIGNWAPVNLGVGLNKGKWLSIFQNSPTTSEKLDFNIKIKGDNLSGSCKYENGVFYSETGSSSSGCTVQVMSGDATFVFY</sequence>
<name>SUN1_ASPFU</name>
<dbReference type="EC" id="3.2.1.-"/>
<dbReference type="EMBL" id="AAHF01000009">
    <property type="protein sequence ID" value="EAL86926.1"/>
    <property type="molecule type" value="Genomic_DNA"/>
</dbReference>
<dbReference type="RefSeq" id="XP_748964.1">
    <property type="nucleotide sequence ID" value="XM_743871.1"/>
</dbReference>
<dbReference type="SMR" id="Q4WGL5"/>
<dbReference type="FunCoup" id="Q4WGL5">
    <property type="interactions" value="56"/>
</dbReference>
<dbReference type="STRING" id="330879.Q4WGL5"/>
<dbReference type="CAZy" id="GH132">
    <property type="family name" value="Glycoside Hydrolase Family 132"/>
</dbReference>
<dbReference type="GlyCosmos" id="Q4WGL5">
    <property type="glycosylation" value="2 sites, No reported glycans"/>
</dbReference>
<dbReference type="EnsemblFungi" id="EAL86926">
    <property type="protein sequence ID" value="EAL86926"/>
    <property type="gene ID" value="AFUA_7G05450"/>
</dbReference>
<dbReference type="GeneID" id="3506240"/>
<dbReference type="KEGG" id="afm:AFUA_7G05450"/>
<dbReference type="VEuPathDB" id="FungiDB:Afu7g05450"/>
<dbReference type="eggNOG" id="ENOG502QPVV">
    <property type="taxonomic scope" value="Eukaryota"/>
</dbReference>
<dbReference type="HOGENOM" id="CLU_033459_1_0_1"/>
<dbReference type="InParanoid" id="Q4WGL5"/>
<dbReference type="OMA" id="CSYACQS"/>
<dbReference type="OrthoDB" id="5339822at2759"/>
<dbReference type="Proteomes" id="UP000002530">
    <property type="component" value="Chromosome 7"/>
</dbReference>
<dbReference type="GO" id="GO:0009986">
    <property type="term" value="C:cell surface"/>
    <property type="evidence" value="ECO:0000318"/>
    <property type="project" value="GO_Central"/>
</dbReference>
<dbReference type="GO" id="GO:0005576">
    <property type="term" value="C:extracellular region"/>
    <property type="evidence" value="ECO:0007669"/>
    <property type="project" value="UniProtKB-SubCell"/>
</dbReference>
<dbReference type="GO" id="GO:0009277">
    <property type="term" value="C:fungal-type cell wall"/>
    <property type="evidence" value="ECO:0000318"/>
    <property type="project" value="GO_Central"/>
</dbReference>
<dbReference type="GO" id="GO:0030246">
    <property type="term" value="F:carbohydrate binding"/>
    <property type="evidence" value="ECO:0000314"/>
    <property type="project" value="AspGD"/>
</dbReference>
<dbReference type="GO" id="GO:0016798">
    <property type="term" value="F:hydrolase activity, acting on glycosyl bonds"/>
    <property type="evidence" value="ECO:0007669"/>
    <property type="project" value="UniProtKB-KW"/>
</dbReference>
<dbReference type="GO" id="GO:0006076">
    <property type="term" value="P:(1-&gt;3)-beta-D-glucan catabolic process"/>
    <property type="evidence" value="ECO:0000314"/>
    <property type="project" value="AspGD"/>
</dbReference>
<dbReference type="GO" id="GO:0031505">
    <property type="term" value="P:fungal-type cell wall organization"/>
    <property type="evidence" value="ECO:0000318"/>
    <property type="project" value="GO_Central"/>
</dbReference>
<dbReference type="GO" id="GO:0030448">
    <property type="term" value="P:hyphal growth"/>
    <property type="evidence" value="ECO:0000315"/>
    <property type="project" value="AspGD"/>
</dbReference>
<dbReference type="InterPro" id="IPR051526">
    <property type="entry name" value="Beta-Glucosidase_SUN"/>
</dbReference>
<dbReference type="InterPro" id="IPR005556">
    <property type="entry name" value="SUN"/>
</dbReference>
<dbReference type="PANTHER" id="PTHR31316">
    <property type="entry name" value="BETA-GLUCOSIDASE-LIKE PROTEIN NCA3, MITOCHONDRIAL-RELATED"/>
    <property type="match status" value="1"/>
</dbReference>
<dbReference type="PANTHER" id="PTHR31316:SF0">
    <property type="entry name" value="SECRETED BETA-GLUCOSIDASE SIM1-RELATED"/>
    <property type="match status" value="1"/>
</dbReference>
<dbReference type="Pfam" id="PF03856">
    <property type="entry name" value="SUN"/>
    <property type="match status" value="1"/>
</dbReference>
<proteinExistence type="evidence at protein level"/>
<organism>
    <name type="scientific">Aspergillus fumigatus (strain ATCC MYA-4609 / CBS 101355 / FGSC A1100 / Af293)</name>
    <name type="common">Neosartorya fumigata</name>
    <dbReference type="NCBI Taxonomy" id="330879"/>
    <lineage>
        <taxon>Eukaryota</taxon>
        <taxon>Fungi</taxon>
        <taxon>Dikarya</taxon>
        <taxon>Ascomycota</taxon>
        <taxon>Pezizomycotina</taxon>
        <taxon>Eurotiomycetes</taxon>
        <taxon>Eurotiomycetidae</taxon>
        <taxon>Eurotiales</taxon>
        <taxon>Aspergillaceae</taxon>
        <taxon>Aspergillus</taxon>
        <taxon>Aspergillus subgen. Fumigati</taxon>
    </lineage>
</organism>
<protein>
    <recommendedName>
        <fullName>Secreted beta-glucosidase sun1</fullName>
        <ecNumber>3.2.1.-</ecNumber>
    </recommendedName>
</protein>
<accession>Q4WGL5</accession>